<organism>
    <name type="scientific">Sorghum bicolor</name>
    <name type="common">Sorghum</name>
    <name type="synonym">Sorghum vulgare</name>
    <dbReference type="NCBI Taxonomy" id="4558"/>
    <lineage>
        <taxon>Eukaryota</taxon>
        <taxon>Viridiplantae</taxon>
        <taxon>Streptophyta</taxon>
        <taxon>Embryophyta</taxon>
        <taxon>Tracheophyta</taxon>
        <taxon>Spermatophyta</taxon>
        <taxon>Magnoliopsida</taxon>
        <taxon>Liliopsida</taxon>
        <taxon>Poales</taxon>
        <taxon>Poaceae</taxon>
        <taxon>PACMAD clade</taxon>
        <taxon>Panicoideae</taxon>
        <taxon>Andropogonodae</taxon>
        <taxon>Andropogoneae</taxon>
        <taxon>Sorghinae</taxon>
        <taxon>Sorghum</taxon>
    </lineage>
</organism>
<sequence>MTIAFQLAVFALIATSSVLVISVPLVFASPDGWSNNKNVVFSGTSLWIGLVFLVAILNSLIS</sequence>
<dbReference type="EMBL" id="EF115542">
    <property type="protein sequence ID" value="ABK79483.1"/>
    <property type="molecule type" value="Genomic_DNA"/>
</dbReference>
<dbReference type="RefSeq" id="XP_002457911.1">
    <property type="nucleotide sequence ID" value="XM_002457866.1"/>
</dbReference>
<dbReference type="RefSeq" id="YP_899394.1">
    <property type="nucleotide sequence ID" value="NC_008602.1"/>
</dbReference>
<dbReference type="SMR" id="A1E9R1"/>
<dbReference type="FunCoup" id="A1E9R1">
    <property type="interactions" value="89"/>
</dbReference>
<dbReference type="STRING" id="4558.A1E9R1"/>
<dbReference type="EnsemblPlants" id="EES03031">
    <property type="protein sequence ID" value="EES03031"/>
    <property type="gene ID" value="SORBI_3003G173116"/>
</dbReference>
<dbReference type="GeneID" id="4549106"/>
<dbReference type="Gramene" id="EES03031">
    <property type="protein sequence ID" value="EES03031"/>
    <property type="gene ID" value="SORBI_3003G173116"/>
</dbReference>
<dbReference type="KEGG" id="sbi:4549106"/>
<dbReference type="eggNOG" id="ENOG502S7KE">
    <property type="taxonomic scope" value="Eukaryota"/>
</dbReference>
<dbReference type="HOGENOM" id="CLU_195286_0_0_1"/>
<dbReference type="InParanoid" id="A1E9R1"/>
<dbReference type="OMA" id="MSIVFQI"/>
<dbReference type="OrthoDB" id="769790at2759"/>
<dbReference type="Proteomes" id="UP000000768">
    <property type="component" value="Chloroplast"/>
</dbReference>
<dbReference type="ExpressionAtlas" id="A1E9R1">
    <property type="expression patterns" value="baseline"/>
</dbReference>
<dbReference type="GO" id="GO:0009535">
    <property type="term" value="C:chloroplast thylakoid membrane"/>
    <property type="evidence" value="ECO:0007669"/>
    <property type="project" value="UniProtKB-SubCell"/>
</dbReference>
<dbReference type="GO" id="GO:0009539">
    <property type="term" value="C:photosystem II reaction center"/>
    <property type="evidence" value="ECO:0007669"/>
    <property type="project" value="InterPro"/>
</dbReference>
<dbReference type="GO" id="GO:0015979">
    <property type="term" value="P:photosynthesis"/>
    <property type="evidence" value="ECO:0007669"/>
    <property type="project" value="UniProtKB-UniRule"/>
</dbReference>
<dbReference type="GO" id="GO:0042549">
    <property type="term" value="P:photosystem II stabilization"/>
    <property type="evidence" value="ECO:0007669"/>
    <property type="project" value="InterPro"/>
</dbReference>
<dbReference type="FunFam" id="1.10.287.740:FF:000001">
    <property type="entry name" value="Photosystem II reaction center protein Z"/>
    <property type="match status" value="1"/>
</dbReference>
<dbReference type="Gene3D" id="1.10.287.740">
    <property type="entry name" value="Photosystem II PsbZ, reaction centre"/>
    <property type="match status" value="1"/>
</dbReference>
<dbReference type="HAMAP" id="MF_00644">
    <property type="entry name" value="PSII_PsbZ"/>
    <property type="match status" value="1"/>
</dbReference>
<dbReference type="InterPro" id="IPR002644">
    <property type="entry name" value="PSII_PsbZ"/>
</dbReference>
<dbReference type="InterPro" id="IPR036512">
    <property type="entry name" value="PSII_PsbZ_sf"/>
</dbReference>
<dbReference type="NCBIfam" id="TIGR03043">
    <property type="entry name" value="PS_II_psbZ"/>
    <property type="match status" value="1"/>
</dbReference>
<dbReference type="PANTHER" id="PTHR34971">
    <property type="entry name" value="PHOTOSYSTEM II REACTION CENTER PROTEIN Z"/>
    <property type="match status" value="1"/>
</dbReference>
<dbReference type="PANTHER" id="PTHR34971:SF2">
    <property type="entry name" value="PHOTOSYSTEM II REACTION CENTER PROTEIN Z"/>
    <property type="match status" value="1"/>
</dbReference>
<dbReference type="Pfam" id="PF01737">
    <property type="entry name" value="Ycf9"/>
    <property type="match status" value="1"/>
</dbReference>
<dbReference type="SUPFAM" id="SSF161055">
    <property type="entry name" value="PsbZ-like"/>
    <property type="match status" value="1"/>
</dbReference>
<comment type="function">
    <text evidence="1">May control the interaction of photosystem II (PSII) cores with the light-harvesting antenna, regulates electron flow through the 2 photosystem reaction centers. PSII is a light-driven water plastoquinone oxidoreductase, using light energy to abstract electrons from H(2)O, generating a proton gradient subsequently used for ATP formation.</text>
</comment>
<comment type="subunit">
    <text evidence="1">PSII is composed of 1 copy each of membrane proteins PsbA, PsbB, PsbC, PsbD, PsbE, PsbF, PsbH, PsbI, PsbJ, PsbK, PsbL, PsbM, PsbT, PsbY, PsbZ, Psb30/Ycf12, at least 3 peripheral proteins of the oxygen-evolving complex and a large number of cofactors. It forms dimeric complexes.</text>
</comment>
<comment type="subcellular location">
    <subcellularLocation>
        <location evidence="1">Plastid</location>
        <location evidence="1">Chloroplast thylakoid membrane</location>
        <topology evidence="1">Multi-pass membrane protein</topology>
    </subcellularLocation>
</comment>
<comment type="similarity">
    <text evidence="1">Belongs to the PsbZ family.</text>
</comment>
<gene>
    <name evidence="1" type="primary">psbZ</name>
</gene>
<evidence type="ECO:0000255" key="1">
    <source>
        <dbReference type="HAMAP-Rule" id="MF_00644"/>
    </source>
</evidence>
<accession>A1E9R1</accession>
<reference key="1">
    <citation type="journal article" date="2007" name="Theor. Appl. Genet.">
        <title>Complete chloroplast genome sequences of Hordeum vulgare, Sorghum bicolor and Agrostis stolonifera, and comparative analyses with other grass genomes.</title>
        <authorList>
            <person name="Saski C."/>
            <person name="Lee S.-B."/>
            <person name="Fjellheim S."/>
            <person name="Guda C."/>
            <person name="Jansen R.K."/>
            <person name="Luo H."/>
            <person name="Tomkins J."/>
            <person name="Rognli O.A."/>
            <person name="Daniell H."/>
            <person name="Clarke J.L."/>
        </authorList>
    </citation>
    <scope>NUCLEOTIDE SEQUENCE [LARGE SCALE GENOMIC DNA]</scope>
    <source>
        <strain>cv. BTx623</strain>
    </source>
</reference>
<feature type="chain" id="PRO_0000277238" description="Photosystem II reaction center protein Z">
    <location>
        <begin position="1"/>
        <end position="62"/>
    </location>
</feature>
<feature type="transmembrane region" description="Helical" evidence="1">
    <location>
        <begin position="8"/>
        <end position="28"/>
    </location>
</feature>
<feature type="transmembrane region" description="Helical" evidence="1">
    <location>
        <begin position="41"/>
        <end position="61"/>
    </location>
</feature>
<protein>
    <recommendedName>
        <fullName evidence="1">Photosystem II reaction center protein Z</fullName>
        <shortName evidence="1">PSII-Z</shortName>
    </recommendedName>
</protein>
<proteinExistence type="inferred from homology"/>
<geneLocation type="chloroplast"/>
<name>PSBZ_SORBI</name>
<keyword id="KW-0150">Chloroplast</keyword>
<keyword id="KW-0472">Membrane</keyword>
<keyword id="KW-0602">Photosynthesis</keyword>
<keyword id="KW-0604">Photosystem II</keyword>
<keyword id="KW-0934">Plastid</keyword>
<keyword id="KW-0674">Reaction center</keyword>
<keyword id="KW-1185">Reference proteome</keyword>
<keyword id="KW-0793">Thylakoid</keyword>
<keyword id="KW-0812">Transmembrane</keyword>
<keyword id="KW-1133">Transmembrane helix</keyword>